<dbReference type="EC" id="2.6.1.87" evidence="1"/>
<dbReference type="EMBL" id="CP001120">
    <property type="protein sequence ID" value="ACF69348.1"/>
    <property type="status" value="ALT_INIT"/>
    <property type="molecule type" value="Genomic_DNA"/>
</dbReference>
<dbReference type="RefSeq" id="WP_001279284.1">
    <property type="nucleotide sequence ID" value="NC_011083.1"/>
</dbReference>
<dbReference type="SMR" id="B4TBG4"/>
<dbReference type="KEGG" id="seh:SeHA_C2537"/>
<dbReference type="HOGENOM" id="CLU_033332_0_3_6"/>
<dbReference type="UniPathway" id="UPA00030"/>
<dbReference type="UniPathway" id="UPA00032">
    <property type="reaction ID" value="UER00493"/>
</dbReference>
<dbReference type="Proteomes" id="UP000001866">
    <property type="component" value="Chromosome"/>
</dbReference>
<dbReference type="GO" id="GO:0016020">
    <property type="term" value="C:membrane"/>
    <property type="evidence" value="ECO:0007669"/>
    <property type="project" value="GOC"/>
</dbReference>
<dbReference type="GO" id="GO:0030170">
    <property type="term" value="F:pyridoxal phosphate binding"/>
    <property type="evidence" value="ECO:0007669"/>
    <property type="project" value="TreeGrafter"/>
</dbReference>
<dbReference type="GO" id="GO:0099620">
    <property type="term" value="F:UDP-4-amino-4-deoxy-L-arabinose aminotransferase"/>
    <property type="evidence" value="ECO:0007669"/>
    <property type="project" value="UniProtKB-EC"/>
</dbReference>
<dbReference type="GO" id="GO:0009245">
    <property type="term" value="P:lipid A biosynthetic process"/>
    <property type="evidence" value="ECO:0007669"/>
    <property type="project" value="UniProtKB-KW"/>
</dbReference>
<dbReference type="GO" id="GO:0009103">
    <property type="term" value="P:lipopolysaccharide biosynthetic process"/>
    <property type="evidence" value="ECO:0007669"/>
    <property type="project" value="UniProtKB-UniRule"/>
</dbReference>
<dbReference type="GO" id="GO:0046677">
    <property type="term" value="P:response to antibiotic"/>
    <property type="evidence" value="ECO:0007669"/>
    <property type="project" value="UniProtKB-KW"/>
</dbReference>
<dbReference type="CDD" id="cd00616">
    <property type="entry name" value="AHBA_syn"/>
    <property type="match status" value="1"/>
</dbReference>
<dbReference type="FunFam" id="3.40.640.10:FF:000040">
    <property type="entry name" value="UDP-4-amino-4-deoxy-L-arabinose--oxoglutarate aminotransferase"/>
    <property type="match status" value="1"/>
</dbReference>
<dbReference type="FunFam" id="3.90.1150.10:FF:000030">
    <property type="entry name" value="UDP-4-amino-4-deoxy-L-arabinose--oxoglutarate aminotransferase"/>
    <property type="match status" value="1"/>
</dbReference>
<dbReference type="Gene3D" id="3.90.1150.10">
    <property type="entry name" value="Aspartate Aminotransferase, domain 1"/>
    <property type="match status" value="1"/>
</dbReference>
<dbReference type="Gene3D" id="3.40.640.10">
    <property type="entry name" value="Type I PLP-dependent aspartate aminotransferase-like (Major domain)"/>
    <property type="match status" value="1"/>
</dbReference>
<dbReference type="HAMAP" id="MF_01167">
    <property type="entry name" value="ArnB_transfer"/>
    <property type="match status" value="1"/>
</dbReference>
<dbReference type="InterPro" id="IPR022850">
    <property type="entry name" value="ArnB_NH2Trfase"/>
</dbReference>
<dbReference type="InterPro" id="IPR000653">
    <property type="entry name" value="DegT/StrS_aminotransferase"/>
</dbReference>
<dbReference type="InterPro" id="IPR015424">
    <property type="entry name" value="PyrdxlP-dep_Trfase"/>
</dbReference>
<dbReference type="InterPro" id="IPR015421">
    <property type="entry name" value="PyrdxlP-dep_Trfase_major"/>
</dbReference>
<dbReference type="InterPro" id="IPR015422">
    <property type="entry name" value="PyrdxlP-dep_Trfase_small"/>
</dbReference>
<dbReference type="NCBIfam" id="NF008658">
    <property type="entry name" value="PRK11658.1"/>
    <property type="match status" value="1"/>
</dbReference>
<dbReference type="PANTHER" id="PTHR30244">
    <property type="entry name" value="TRANSAMINASE"/>
    <property type="match status" value="1"/>
</dbReference>
<dbReference type="PANTHER" id="PTHR30244:SF41">
    <property type="entry name" value="UDP-4-AMINO-4-DEOXY-L-ARABINOSE--OXOGLUTARATE AMINOTRANSFERASE"/>
    <property type="match status" value="1"/>
</dbReference>
<dbReference type="Pfam" id="PF01041">
    <property type="entry name" value="DegT_DnrJ_EryC1"/>
    <property type="match status" value="1"/>
</dbReference>
<dbReference type="PIRSF" id="PIRSF000390">
    <property type="entry name" value="PLP_StrS"/>
    <property type="match status" value="1"/>
</dbReference>
<dbReference type="SUPFAM" id="SSF53383">
    <property type="entry name" value="PLP-dependent transferases"/>
    <property type="match status" value="1"/>
</dbReference>
<comment type="function">
    <text evidence="1">Catalyzes the conversion of UDP-4-keto-arabinose (UDP-Ara4O) to UDP-4-amino-4-deoxy-L-arabinose (UDP-L-Ara4N). The modified arabinose is attached to lipid A and is required for resistance to polymyxin and cationic antimicrobial peptides.</text>
</comment>
<comment type="catalytic activity">
    <reaction evidence="1">
        <text>UDP-4-amino-4-deoxy-beta-L-arabinose + 2-oxoglutarate = UDP-beta-L-threo-pentopyranos-4-ulose + L-glutamate</text>
        <dbReference type="Rhea" id="RHEA:24710"/>
        <dbReference type="ChEBI" id="CHEBI:16810"/>
        <dbReference type="ChEBI" id="CHEBI:29985"/>
        <dbReference type="ChEBI" id="CHEBI:58708"/>
        <dbReference type="ChEBI" id="CHEBI:58710"/>
        <dbReference type="EC" id="2.6.1.87"/>
    </reaction>
</comment>
<comment type="cofactor">
    <cofactor evidence="1">
        <name>pyridoxal 5'-phosphate</name>
        <dbReference type="ChEBI" id="CHEBI:597326"/>
    </cofactor>
</comment>
<comment type="pathway">
    <text evidence="1">Nucleotide-sugar biosynthesis; UDP-4-deoxy-4-formamido-beta-L-arabinose biosynthesis; UDP-4-deoxy-4-formamido-beta-L-arabinose from UDP-alpha-D-glucuronate: step 2/3.</text>
</comment>
<comment type="pathway">
    <text evidence="1">Bacterial outer membrane biogenesis; lipopolysaccharide biosynthesis.</text>
</comment>
<comment type="subunit">
    <text evidence="1">Homodimer.</text>
</comment>
<comment type="similarity">
    <text evidence="1">Belongs to the DegT/DnrJ/EryC1 family. ArnB subfamily.</text>
</comment>
<comment type="sequence caution" evidence="2">
    <conflict type="erroneous initiation">
        <sequence resource="EMBL-CDS" id="ACF69348"/>
    </conflict>
</comment>
<organism>
    <name type="scientific">Salmonella heidelberg (strain SL476)</name>
    <dbReference type="NCBI Taxonomy" id="454169"/>
    <lineage>
        <taxon>Bacteria</taxon>
        <taxon>Pseudomonadati</taxon>
        <taxon>Pseudomonadota</taxon>
        <taxon>Gammaproteobacteria</taxon>
        <taxon>Enterobacterales</taxon>
        <taxon>Enterobacteriaceae</taxon>
        <taxon>Salmonella</taxon>
    </lineage>
</organism>
<feature type="chain" id="PRO_0000380539" description="UDP-4-amino-4-deoxy-L-arabinose--oxoglutarate aminotransferase">
    <location>
        <begin position="1"/>
        <end position="379"/>
    </location>
</feature>
<feature type="modified residue" description="N6-(pyridoxal phosphate)lysine" evidence="1">
    <location>
        <position position="182"/>
    </location>
</feature>
<proteinExistence type="inferred from homology"/>
<keyword id="KW-0032">Aminotransferase</keyword>
<keyword id="KW-0046">Antibiotic resistance</keyword>
<keyword id="KW-0441">Lipid A biosynthesis</keyword>
<keyword id="KW-0444">Lipid biosynthesis</keyword>
<keyword id="KW-0443">Lipid metabolism</keyword>
<keyword id="KW-0448">Lipopolysaccharide biosynthesis</keyword>
<keyword id="KW-0663">Pyridoxal phosphate</keyword>
<keyword id="KW-0808">Transferase</keyword>
<name>ARNB_SALHS</name>
<accession>B4TBG4</accession>
<evidence type="ECO:0000255" key="1">
    <source>
        <dbReference type="HAMAP-Rule" id="MF_01167"/>
    </source>
</evidence>
<evidence type="ECO:0000305" key="2"/>
<protein>
    <recommendedName>
        <fullName evidence="1">UDP-4-amino-4-deoxy-L-arabinose--oxoglutarate aminotransferase</fullName>
        <ecNumber evidence="1">2.6.1.87</ecNumber>
    </recommendedName>
    <alternativeName>
        <fullName evidence="1">UDP-(beta-L-threo-pentapyranosyl-4''-ulose diphosphate) aminotransferase</fullName>
        <shortName evidence="1">UDP-Ara4O aminotransferase</shortName>
    </alternativeName>
    <alternativeName>
        <fullName evidence="1">UDP-4-amino-4-deoxy-L-arabinose aminotransferase</fullName>
    </alternativeName>
</protein>
<reference key="1">
    <citation type="journal article" date="2011" name="J. Bacteriol.">
        <title>Comparative genomics of 28 Salmonella enterica isolates: evidence for CRISPR-mediated adaptive sublineage evolution.</title>
        <authorList>
            <person name="Fricke W.F."/>
            <person name="Mammel M.K."/>
            <person name="McDermott P.F."/>
            <person name="Tartera C."/>
            <person name="White D.G."/>
            <person name="Leclerc J.E."/>
            <person name="Ravel J."/>
            <person name="Cebula T.A."/>
        </authorList>
    </citation>
    <scope>NUCLEOTIDE SEQUENCE [LARGE SCALE GENOMIC DNA]</scope>
    <source>
        <strain>SL476</strain>
    </source>
</reference>
<gene>
    <name evidence="1" type="primary">arnB</name>
    <name type="ordered locus">SeHA_C2537</name>
</gene>
<sequence>MSDFLPFSRPAMGAEELAAVKTVLDSGWITTGPKNQELEAAFCRLTGNQYAVAVSSATAGMHIALMALGIGEGDEVITPSMTWVSTLNMIVLLGANPVMVDVDRDTLMVTPEHIEAAITPQTKAIIPVHYAGAPADLDAIYALGERYGIPVIEDAAHATGTSYKGRHIGARGTAIFSFHAIKNITCAEGGIVVTDNPQFADKLRSLKFHGLGVDAWDRQSGGRAPQAEVLAPGYKYNLPDLNAAIALAQLQKLDALNARRAAIAAQYHQAMADLPFQPLSLPSWEHIHAWHLFIIRVDEARCGITRDALMASLKTKGIGTGLHFRAAHTQKYYRERFPTLTLPDTEWNSERICSLPLFPDMTESDFDRVITALHQIAGQ</sequence>